<accession>P0AGB3</accession>
<accession>P00580</accession>
<accession>Q2M7C4</accession>
<reference key="1">
    <citation type="journal article" date="1988" name="J. Bacteriol.">
        <title>Deletion and insertion mutations in the rpoH gene of Escherichia coli that produce functional sigma 32.</title>
        <authorList>
            <person name="Calendar R."/>
            <person name="Erickson J.W."/>
            <person name="Halling C."/>
            <person name="Nolte A."/>
        </authorList>
    </citation>
    <scope>NUCLEOTIDE SEQUENCE [GENOMIC DNA]</scope>
</reference>
<reference key="2">
    <citation type="journal article" date="1984" name="Cell">
        <title>Nucleotide sequence of the heat shock regulatory gene of E. coli suggests its protein product may be a transcription factor.</title>
        <authorList>
            <person name="Landick R."/>
            <person name="Vaughn V."/>
            <person name="Lau E.T."/>
            <person name="Vanbogelen R.A."/>
            <person name="Erickson J.W."/>
            <person name="Neidhardt F.C."/>
        </authorList>
    </citation>
    <scope>NUCLEOTIDE SEQUENCE [GENOMIC DNA]</scope>
    <source>
        <strain>K12</strain>
    </source>
</reference>
<reference key="3">
    <citation type="journal article" date="1984" name="Proc. Natl. Acad. Sci. U.S.A.">
        <title>Heat shock regulatory gene (htpR) of Escherichia coli is required for growth at high temperature but is dispensable at low temperature.</title>
        <authorList>
            <person name="Yura T."/>
            <person name="Tobe T."/>
            <person name="Ito K."/>
            <person name="Osawa T."/>
        </authorList>
    </citation>
    <scope>NUCLEOTIDE SEQUENCE [GENOMIC DNA]</scope>
    <scope>FUNCTION</scope>
</reference>
<reference key="4">
    <citation type="journal article" date="1994" name="Nucleic Acids Res.">
        <title>Analysis of the Escherichia coli genome. V. DNA sequence of the region from 76.0 to 81.5 minutes.</title>
        <authorList>
            <person name="Sofia H.J."/>
            <person name="Burland V."/>
            <person name="Daniels D.L."/>
            <person name="Plunkett G. III"/>
            <person name="Blattner F.R."/>
        </authorList>
    </citation>
    <scope>NUCLEOTIDE SEQUENCE [LARGE SCALE GENOMIC DNA]</scope>
    <source>
        <strain>K12 / MG1655 / ATCC 47076</strain>
    </source>
</reference>
<reference key="5">
    <citation type="journal article" date="1997" name="Science">
        <title>The complete genome sequence of Escherichia coli K-12.</title>
        <authorList>
            <person name="Blattner F.R."/>
            <person name="Plunkett G. III"/>
            <person name="Bloch C.A."/>
            <person name="Perna N.T."/>
            <person name="Burland V."/>
            <person name="Riley M."/>
            <person name="Collado-Vides J."/>
            <person name="Glasner J.D."/>
            <person name="Rode C.K."/>
            <person name="Mayhew G.F."/>
            <person name="Gregor J."/>
            <person name="Davis N.W."/>
            <person name="Kirkpatrick H.A."/>
            <person name="Goeden M.A."/>
            <person name="Rose D.J."/>
            <person name="Mau B."/>
            <person name="Shao Y."/>
        </authorList>
    </citation>
    <scope>NUCLEOTIDE SEQUENCE [LARGE SCALE GENOMIC DNA]</scope>
    <source>
        <strain>K12 / MG1655 / ATCC 47076</strain>
    </source>
</reference>
<reference key="6">
    <citation type="journal article" date="2006" name="Mol. Syst. Biol.">
        <title>Highly accurate genome sequences of Escherichia coli K-12 strains MG1655 and W3110.</title>
        <authorList>
            <person name="Hayashi K."/>
            <person name="Morooka N."/>
            <person name="Yamamoto Y."/>
            <person name="Fujita K."/>
            <person name="Isono K."/>
            <person name="Choi S."/>
            <person name="Ohtsubo E."/>
            <person name="Baba T."/>
            <person name="Wanner B.L."/>
            <person name="Mori H."/>
            <person name="Horiuchi T."/>
        </authorList>
    </citation>
    <scope>NUCLEOTIDE SEQUENCE [LARGE SCALE GENOMIC DNA]</scope>
    <source>
        <strain>K12 / W3110 / ATCC 27325 / DSM 5911</strain>
    </source>
</reference>
<reference key="7">
    <citation type="journal article" date="1987" name="Genes Dev.">
        <title>Sigma 32 synthesis can regulate the synthesis of heat shock proteins in Escherichia coli.</title>
        <authorList>
            <person name="Grossman A.D."/>
            <person name="Straus D.B."/>
            <person name="Walter W.A."/>
            <person name="Gross C.A."/>
        </authorList>
    </citation>
    <scope>FUNCTION</scope>
    <scope>INDUCTION</scope>
</reference>
<reference key="8">
    <citation type="journal article" date="1987" name="Genes Dev.">
        <title>Regulation of the promoters and transcripts of rpoH, the Escherichia coli heat shock regulatory gene.</title>
        <authorList>
            <person name="Erickson J.W."/>
            <person name="Vaughn V."/>
            <person name="Walter W.A."/>
            <person name="Neidhardt F.C."/>
            <person name="Gross C.A."/>
        </authorList>
    </citation>
    <scope>INDUCTION</scope>
</reference>
<reference key="9">
    <citation type="journal article" date="1987" name="Nature">
        <title>The heat shock response of E. coli is regulated by changes in the concentration of sigma 32.</title>
        <authorList>
            <person name="Straus D.B."/>
            <person name="Walter W.A."/>
            <person name="Gross C.A."/>
        </authorList>
    </citation>
    <scope>FUNCTION</scope>
    <scope>INDUCTION</scope>
</reference>
<reference key="10">
    <citation type="journal article" date="1996" name="EMBO J.">
        <title>A cycle of binding and release of the DnaK, DnaJ and GrpE chaperones regulates activity of the Escherichia coli heat shock transcription factor sigma32.</title>
        <authorList>
            <person name="Gamer J."/>
            <person name="Multhaup G."/>
            <person name="Tomoyasu T."/>
            <person name="McCarty J.S."/>
            <person name="Rudiger S."/>
            <person name="Schonfeld H.J."/>
            <person name="Schirra C."/>
            <person name="Bujard H."/>
            <person name="Bukau B."/>
        </authorList>
    </citation>
    <scope>INTERACTION WITH DNAK AND DNAJ</scope>
    <scope>INDUCTION</scope>
    <source>
        <strain>K12</strain>
    </source>
</reference>
<reference key="11">
    <citation type="journal article" date="1997" name="Electrophoresis">
        <title>Escherichia coli proteome analysis using the gene-protein database.</title>
        <authorList>
            <person name="VanBogelen R.A."/>
            <person name="Abshire K.Z."/>
            <person name="Moldover B."/>
            <person name="Olson E.R."/>
            <person name="Neidhardt F.C."/>
        </authorList>
    </citation>
    <scope>IDENTIFICATION BY 2D-GEL</scope>
</reference>
<reference key="12">
    <citation type="journal article" date="1997" name="Proc. Natl. Acad. Sci. U.S.A.">
        <title>A sigma32 mutant with a single amino acid change in the highly conserved region 2.2 exhibits reduced core RNA polymerase affinity.</title>
        <authorList>
            <person name="Joo D.M."/>
            <person name="Ng N."/>
            <person name="Calendar R."/>
        </authorList>
    </citation>
    <scope>INTERACTION WITH RNA POLYMERASE</scope>
    <scope>MUTAGENESIS OF GLN-80</scope>
</reference>
<reference key="13">
    <citation type="journal article" date="1998" name="Mol. Microbiol.">
        <title>Heat shock regulation in the ftsH null mutant of Escherichia coli: dissection of stability and activity control mechanisms of sigma32 in vivo.</title>
        <authorList>
            <person name="Tatsuta T."/>
            <person name="Tomoyasu T."/>
            <person name="Bukau B."/>
            <person name="Kitagawa M."/>
            <person name="Mori H."/>
            <person name="Karata K."/>
            <person name="Ogura T."/>
        </authorList>
    </citation>
    <scope>INDUCTION</scope>
    <scope>DEGRADATION BY FTSH</scope>
    <source>
        <strain>K12</strain>
    </source>
</reference>
<reference key="14">
    <citation type="journal article" date="1999" name="Genes Dev.">
        <title>Translational induction of heat shock transcription factor sigma32: evidence for a built-in RNA thermosensor.</title>
        <authorList>
            <person name="Morita M.T."/>
            <person name="Tanaka Y."/>
            <person name="Kodama T.S."/>
            <person name="Kyogoku Y."/>
            <person name="Yanagi H."/>
            <person name="Yura T."/>
        </authorList>
    </citation>
    <scope>INDUCTION</scope>
    <scope>TRANSLATIONAL THERMOREGULATION</scope>
    <source>
        <strain>K12 / MC4100 / ATCC 35695 / DSM 6574</strain>
    </source>
</reference>
<reference key="15">
    <citation type="journal article" date="1999" name="J. Bacteriol.">
        <title>Heat-induced synthesis of sigma32 in Escherichia coli: structural and functional dissection of rpoH mRNA secondary structure.</title>
        <authorList>
            <person name="Morita M."/>
            <person name="Kanemori M."/>
            <person name="Yanagi H."/>
            <person name="Yura T."/>
        </authorList>
    </citation>
    <scope>INDUCTION</scope>
    <scope>TRANSLATIONAL THERMOREGULATION</scope>
    <source>
        <strain>K12 / MC4100 / ATCC 35695 / DSM 6574</strain>
    </source>
</reference>
<reference key="16">
    <citation type="journal article" date="2005" name="J. Biol. Chem.">
        <title>The global transcriptional response of Escherichia coli to induced sigma 32 protein involves sigma 32 regulon activation followed by inactivation and degradation of sigma 32 in vivo.</title>
        <authorList>
            <person name="Zhao K."/>
            <person name="Liu M."/>
            <person name="Burgess R.R."/>
        </authorList>
    </citation>
    <scope>FUNCTION</scope>
    <scope>INDUCTION</scope>
    <source>
        <strain>K12 / MG1655 / ATCC 47076</strain>
    </source>
</reference>
<reference key="17">
    <citation type="journal article" date="2006" name="Arch. Microbiol.">
        <title>Effect of anaerobic and stationary phase growth conditions on the heat shock and oxidative stress responses in Escherichia coli K-12.</title>
        <authorList>
            <person name="Diaz-Acosta A."/>
            <person name="Sandoval M.L."/>
            <person name="Delgado-Olivares L."/>
            <person name="Membrillo-Hernandez J."/>
        </authorList>
    </citation>
    <scope>DISRUPTION PHENOTYPE</scope>
    <source>
        <strain>K12 / MC4100 / ATCC 35695 / DSM 6574</strain>
    </source>
</reference>
<reference key="18">
    <citation type="journal article" date="2006" name="Genes Dev.">
        <title>Regulon and promoter analysis of the E. coli heat-shock factor, sigma32, reveals a multifaceted cellular response to heat stress.</title>
        <authorList>
            <person name="Nonaka G."/>
            <person name="Blankschien M."/>
            <person name="Herman C."/>
            <person name="Gross C.A."/>
            <person name="Rhodius V.A."/>
        </authorList>
    </citation>
    <scope>FUNCTION</scope>
    <source>
        <strain>K12 / MG1655 / ATCC 47076</strain>
    </source>
</reference>
<reference key="19">
    <citation type="journal article" date="2009" name="J. Bacteriol.">
        <title>Growth phase- and cell division-dependent activation and inactivation of the {sigma}32 regulon in Escherichia coli.</title>
        <authorList>
            <person name="Wagner M.A."/>
            <person name="Zahrl D."/>
            <person name="Rieser G."/>
            <person name="Koraimann G."/>
        </authorList>
    </citation>
    <scope>INDUCTION DURING CELL DIVISION</scope>
    <source>
        <strain>K12 / MG1655 / ATCC 47076</strain>
    </source>
</reference>
<sequence length="284" mass="32469">MTDKMQSLALAPVGNLDSYIRAANAWPMLSADEERALAEKLHYHGDLEAAKTLILSHLRFVVHIARNYAGYGLPQADLIQEGNIGLMKAVRRFNPEVGVRLVSFAVHWIKAEIHEYVLRNWRIVKVATTKAQRKLFFNLRKTKQRLGWFNQDEVEMVARELGVTSKDVREMESRMAAQDMTFDLSSDDDSDSQPMAPVLYLQDKSSNFADGIEDDNWEEQAANRLTDAMQGLDERSQDIIRARWLDEDNKSTLQELADRYGVSAERVRQLEKNAMKKLRAAIEA</sequence>
<keyword id="KW-0002">3D-structure</keyword>
<keyword id="KW-0963">Cytoplasm</keyword>
<keyword id="KW-0238">DNA-binding</keyword>
<keyword id="KW-1185">Reference proteome</keyword>
<keyword id="KW-0731">Sigma factor</keyword>
<keyword id="KW-0346">Stress response</keyword>
<keyword id="KW-0804">Transcription</keyword>
<keyword id="KW-0805">Transcription regulation</keyword>
<protein>
    <recommendedName>
        <fullName evidence="2">RNA polymerase sigma factor RpoH</fullName>
    </recommendedName>
    <alternativeName>
        <fullName>Heat shock regulatory protein F33.4</fullName>
    </alternativeName>
    <alternativeName>
        <fullName evidence="2">RNA polymerase sigma-32 factor</fullName>
    </alternativeName>
</protein>
<comment type="function">
    <text evidence="2 4 6 8 9 11">Sigma factors are initiation factors that promote the attachment of RNA polymerase to specific initiation sites and are then released. This sigma factor is involved in regulation of expression of heat shock genes. Intracellular concentration of free RpoH protein increases in response to heat shock, which causes association with RNA polymerase (RNAP) and initiation of transcription of heat shock genes, including numerous global transcriptional regulators and genes involved in maintaining membrane functionality and homeostasis. RpoH is then quickly degraded, leading to a decrease in the rate of synthesis of heat shock proteins and shut-off of the heat shock response.</text>
</comment>
<comment type="subunit">
    <text evidence="2 12 13">Interacts with the RNA polymerase core enzyme. Interacts with DnaK and DnaJ.</text>
</comment>
<comment type="interaction">
    <interactant intactId="EBI-555342">
        <id>P0AGB3</id>
    </interactant>
    <interactant intactId="EBI-542092">
        <id>P0A6Y8</id>
        <label>dnaK</label>
    </interactant>
    <organismsDiffer>false</organismsDiffer>
    <experiments>7</experiments>
</comment>
<comment type="interaction">
    <interactant intactId="EBI-555342">
        <id>P0AGB3</id>
    </interactant>
    <interactant intactId="EBI-369938">
        <id>P0AGD7</id>
        <label>ffh</label>
    </interactant>
    <organismsDiffer>false</organismsDiffer>
    <experiments>4</experiments>
</comment>
<comment type="interaction">
    <interactant intactId="EBI-555342">
        <id>P0AGB3</id>
    </interactant>
    <interactant intactId="EBI-548381">
        <id>P0AAI3</id>
        <label>ftsH</label>
    </interactant>
    <organismsDiffer>false</organismsDiffer>
    <experiments>4</experiments>
</comment>
<comment type="interaction">
    <interactant intactId="EBI-555342">
        <id>P0AGB3</id>
    </interactant>
    <interactant intactId="EBI-543750">
        <id>P0A6F5</id>
        <label>groEL</label>
    </interactant>
    <organismsDiffer>false</organismsDiffer>
    <experiments>3</experiments>
</comment>
<comment type="subcellular location">
    <subcellularLocation>
        <location evidence="2">Cytoplasm</location>
    </subcellularLocation>
</comment>
<comment type="induction">
    <text evidence="3 4 7 8 9 10 12 14 15">Subject to complex regulation at multiple levels (transcription, translation, regulation of activity and degradation). In the absence of heat shock, or after heat shock, activity is inhibited by transient association with DnaK and DnaJ, which reduces the amounts of free active RpoH, makes it unstable and mediates its degradation by the FtsH protease. During heat shock, the intracellular concentration of RpoH increases, due to slightly increased transcription, increased synthesis and stabilization of the protein. Induction occurs mainly at the post-transcriptional level, via translational thermoregulation: at low temperature, the structure of the rpoH mRNA blocks its translation, while at high temperature, melting of the mRNA secondary structure facilitates ribosome binding and synthesis of the RpoH protein. In addition, during heat shock, stabilization of RpoH is triggered by the titration of free DnaK/DnaJ by stress-induced misfolded proteins. Can also be induced by other stress conditions, including during the first round of cell division.</text>
</comment>
<comment type="domain">
    <text evidence="1">The sigma-70 factor domain-2 mediates sequence-specific interaction with the -10 element in promoter DNA, and plays an important role in melting the double-stranded DNA and the formation of the transcription bubble. The sigma-70 factor domain-2 mediates interaction with the RNA polymerase subunits RpoB and RpoC (By similarity).</text>
</comment>
<comment type="domain">
    <text evidence="1">The sigma-70 factor domain-4 contains a helix-turn-helix (H-T-H) motif that mediates interaction with the -35 element in promoter DNA. The domain also mediates interaction with the RNA polymerase subunit RpoA (By similarity).</text>
</comment>
<comment type="disruption phenotype">
    <text evidence="5">Mutants exhibit an increased sensitivity to heat shock but only in the exponential phase of aerobic growth.</text>
</comment>
<comment type="miscellaneous">
    <text evidence="17">May only be involved in heat shocks that occur during exponential phase of growth under aerobic conditions. Different mechanisms may play a prime role during stationary phase and anaerobic growth (PubMed:16775749).</text>
</comment>
<comment type="similarity">
    <text evidence="2">Belongs to the sigma-70 factor family. RpoH subfamily.</text>
</comment>
<feature type="chain" id="PRO_0000093957" description="RNA polymerase sigma factor RpoH">
    <location>
        <begin position="1"/>
        <end position="284"/>
    </location>
</feature>
<feature type="DNA-binding region" description="H-T-H motif" evidence="2">
    <location>
        <begin position="253"/>
        <end position="272"/>
    </location>
</feature>
<feature type="region of interest" description="Sigma-70 factor domain-2" evidence="2">
    <location>
        <begin position="53"/>
        <end position="122"/>
    </location>
</feature>
<feature type="region of interest" description="Sigma-70 factor domain-4" evidence="2">
    <location>
        <begin position="228"/>
        <end position="280"/>
    </location>
</feature>
<feature type="short sequence motif" description="Interaction with polymerase core subunit RpoC">
    <location>
        <begin position="77"/>
        <end position="80"/>
    </location>
</feature>
<feature type="mutagenesis site" description="Decrease in activity. Exhibits reduced affinity for core RNAP." evidence="13">
    <original>Q</original>
    <variation>N</variation>
    <variation>R</variation>
    <location>
        <position position="80"/>
    </location>
</feature>
<feature type="sequence conflict" description="In Ref. 3; AAA23991." evidence="16" ref="3">
    <original>S</original>
    <variation>A</variation>
    <location>
        <position position="185"/>
    </location>
</feature>
<feature type="sequence conflict" description="In Ref. 3; AAA23991." evidence="16" ref="3">
    <original>QP</original>
    <variation>HA</variation>
    <location>
        <begin position="193"/>
        <end position="194"/>
    </location>
</feature>
<feature type="helix" evidence="18">
    <location>
        <begin position="16"/>
        <end position="25"/>
    </location>
</feature>
<feature type="helix" evidence="18">
    <location>
        <begin position="31"/>
        <end position="44"/>
    </location>
</feature>
<feature type="helix" evidence="18">
    <location>
        <begin position="47"/>
        <end position="56"/>
    </location>
</feature>
<feature type="helix" evidence="18">
    <location>
        <begin position="58"/>
        <end position="65"/>
    </location>
</feature>
<feature type="helix" evidence="18">
    <location>
        <begin position="66"/>
        <end position="71"/>
    </location>
</feature>
<feature type="helix" evidence="18">
    <location>
        <begin position="75"/>
        <end position="91"/>
    </location>
</feature>
<feature type="helix" evidence="18">
    <location>
        <begin position="95"/>
        <end position="97"/>
    </location>
</feature>
<feature type="helix" evidence="18">
    <location>
        <begin position="101"/>
        <end position="120"/>
    </location>
</feature>
<feature type="strand" evidence="18">
    <location>
        <begin position="121"/>
        <end position="124"/>
    </location>
</feature>
<feature type="helix" evidence="18">
    <location>
        <begin position="130"/>
        <end position="142"/>
    </location>
</feature>
<feature type="strand" evidence="18">
    <location>
        <begin position="145"/>
        <end position="147"/>
    </location>
</feature>
<feature type="helix" evidence="18">
    <location>
        <begin position="151"/>
        <end position="161"/>
    </location>
</feature>
<feature type="helix" evidence="18">
    <location>
        <begin position="165"/>
        <end position="176"/>
    </location>
</feature>
<feature type="strand" evidence="18">
    <location>
        <begin position="200"/>
        <end position="203"/>
    </location>
</feature>
<feature type="helix" evidence="18">
    <location>
        <begin position="208"/>
        <end position="231"/>
    </location>
</feature>
<feature type="helix" evidence="18">
    <location>
        <begin position="234"/>
        <end position="244"/>
    </location>
</feature>
<feature type="helix" evidence="18">
    <location>
        <begin position="253"/>
        <end position="260"/>
    </location>
</feature>
<feature type="helix" evidence="18">
    <location>
        <begin position="264"/>
        <end position="283"/>
    </location>
</feature>
<evidence type="ECO:0000250" key="1"/>
<evidence type="ECO:0000255" key="2">
    <source>
        <dbReference type="HAMAP-Rule" id="MF_00961"/>
    </source>
</evidence>
<evidence type="ECO:0000269" key="3">
    <source>
    </source>
</evidence>
<evidence type="ECO:0000269" key="4">
    <source>
    </source>
</evidence>
<evidence type="ECO:0000269" key="5">
    <source>
    </source>
</evidence>
<evidence type="ECO:0000269" key="6">
    <source>
    </source>
</evidence>
<evidence type="ECO:0000269" key="7">
    <source>
    </source>
</evidence>
<evidence type="ECO:0000269" key="8">
    <source>
    </source>
</evidence>
<evidence type="ECO:0000269" key="9">
    <source>
    </source>
</evidence>
<evidence type="ECO:0000269" key="10">
    <source>
    </source>
</evidence>
<evidence type="ECO:0000269" key="11">
    <source>
    </source>
</evidence>
<evidence type="ECO:0000269" key="12">
    <source>
    </source>
</evidence>
<evidence type="ECO:0000269" key="13">
    <source>
    </source>
</evidence>
<evidence type="ECO:0000269" key="14">
    <source>
    </source>
</evidence>
<evidence type="ECO:0000269" key="15">
    <source>
    </source>
</evidence>
<evidence type="ECO:0000305" key="16"/>
<evidence type="ECO:0000305" key="17">
    <source>
    </source>
</evidence>
<evidence type="ECO:0007829" key="18">
    <source>
        <dbReference type="PDB" id="8HKC"/>
    </source>
</evidence>
<gene>
    <name evidence="2" type="primary">rpoH</name>
    <name type="synonym">fam</name>
    <name type="synonym">hin</name>
    <name type="synonym">htpR</name>
    <name type="ordered locus">b3461</name>
    <name type="ordered locus">JW3426</name>
</gene>
<name>RPOH_ECOLI</name>
<dbReference type="EMBL" id="M20668">
    <property type="protein sequence ID" value="AAA24587.1"/>
    <property type="molecule type" value="Genomic_DNA"/>
</dbReference>
<dbReference type="EMBL" id="J05516">
    <property type="status" value="NOT_ANNOTATED_CDS"/>
    <property type="molecule type" value="Genomic_DNA"/>
</dbReference>
<dbReference type="EMBL" id="K02177">
    <property type="protein sequence ID" value="AAA23991.1"/>
    <property type="molecule type" value="Genomic_DNA"/>
</dbReference>
<dbReference type="EMBL" id="U00039">
    <property type="protein sequence ID" value="AAB18436.1"/>
    <property type="molecule type" value="Genomic_DNA"/>
</dbReference>
<dbReference type="EMBL" id="U00096">
    <property type="protein sequence ID" value="AAC76486.1"/>
    <property type="molecule type" value="Genomic_DNA"/>
</dbReference>
<dbReference type="EMBL" id="AP009048">
    <property type="protein sequence ID" value="BAE77832.1"/>
    <property type="molecule type" value="Genomic_DNA"/>
</dbReference>
<dbReference type="PIR" id="H65142">
    <property type="entry name" value="RGECH"/>
</dbReference>
<dbReference type="RefSeq" id="NP_417918.1">
    <property type="nucleotide sequence ID" value="NC_000913.3"/>
</dbReference>
<dbReference type="RefSeq" id="WP_000130217.1">
    <property type="nucleotide sequence ID" value="NZ_STEB01000004.1"/>
</dbReference>
<dbReference type="PDB" id="8HKC">
    <property type="method" value="EM"/>
    <property type="resolution" value="2.49 A"/>
    <property type="chains" value="E=1-284"/>
</dbReference>
<dbReference type="PDBsum" id="8HKC"/>
<dbReference type="EMDB" id="EMD-34849"/>
<dbReference type="SMR" id="P0AGB3"/>
<dbReference type="BioGRID" id="4262497">
    <property type="interactions" value="264"/>
</dbReference>
<dbReference type="ComplexPortal" id="CPX-4887">
    <property type="entry name" value="DNA-directed RNA polymerase holoenzyme complex, SigmaH variant"/>
</dbReference>
<dbReference type="DIP" id="DIP-46203N"/>
<dbReference type="FunCoup" id="P0AGB3">
    <property type="interactions" value="187"/>
</dbReference>
<dbReference type="IntAct" id="P0AGB3">
    <property type="interactions" value="19"/>
</dbReference>
<dbReference type="MINT" id="P0AGB3"/>
<dbReference type="STRING" id="511145.b3461"/>
<dbReference type="jPOST" id="P0AGB3"/>
<dbReference type="PaxDb" id="511145-b3461"/>
<dbReference type="DNASU" id="947970"/>
<dbReference type="EnsemblBacteria" id="AAC76486">
    <property type="protein sequence ID" value="AAC76486"/>
    <property type="gene ID" value="b3461"/>
</dbReference>
<dbReference type="GeneID" id="93778530"/>
<dbReference type="GeneID" id="947970"/>
<dbReference type="KEGG" id="ecj:JW3426"/>
<dbReference type="KEGG" id="eco:b3461"/>
<dbReference type="KEGG" id="ecoc:C3026_18750"/>
<dbReference type="PATRIC" id="fig|1411691.4.peg.3264"/>
<dbReference type="EchoBASE" id="EB0890"/>
<dbReference type="eggNOG" id="COG0568">
    <property type="taxonomic scope" value="Bacteria"/>
</dbReference>
<dbReference type="HOGENOM" id="CLU_014793_3_5_6"/>
<dbReference type="InParanoid" id="P0AGB3"/>
<dbReference type="OMA" id="MDAPFVQ"/>
<dbReference type="OrthoDB" id="9809557at2"/>
<dbReference type="PhylomeDB" id="P0AGB3"/>
<dbReference type="BioCyc" id="EcoCyc:RPOH-MONOMER"/>
<dbReference type="BioCyc" id="MetaCyc:RPOH-MONOMER"/>
<dbReference type="PRO" id="PR:P0AGB3"/>
<dbReference type="Proteomes" id="UP000000625">
    <property type="component" value="Chromosome"/>
</dbReference>
<dbReference type="GO" id="GO:0005829">
    <property type="term" value="C:cytosol"/>
    <property type="evidence" value="ECO:0000314"/>
    <property type="project" value="EcoCyc"/>
</dbReference>
<dbReference type="GO" id="GO:0000345">
    <property type="term" value="C:cytosolic DNA-directed RNA polymerase complex"/>
    <property type="evidence" value="ECO:0000250"/>
    <property type="project" value="ComplexPortal"/>
</dbReference>
<dbReference type="GO" id="GO:0031421">
    <property type="term" value="C:invertasome"/>
    <property type="evidence" value="ECO:0000314"/>
    <property type="project" value="CAFA"/>
</dbReference>
<dbReference type="GO" id="GO:0005886">
    <property type="term" value="C:plasma membrane"/>
    <property type="evidence" value="ECO:0000314"/>
    <property type="project" value="EcoCyc"/>
</dbReference>
<dbReference type="GO" id="GO:0001000">
    <property type="term" value="F:bacterial-type RNA polymerase core enzyme binding"/>
    <property type="evidence" value="ECO:0000314"/>
    <property type="project" value="EcoCyc"/>
</dbReference>
<dbReference type="GO" id="GO:0001046">
    <property type="term" value="F:core promoter sequence-specific DNA binding"/>
    <property type="evidence" value="ECO:0000314"/>
    <property type="project" value="CAFA"/>
</dbReference>
<dbReference type="GO" id="GO:0003677">
    <property type="term" value="F:DNA binding"/>
    <property type="evidence" value="ECO:0000314"/>
    <property type="project" value="EcoliWiki"/>
</dbReference>
<dbReference type="GO" id="GO:0001216">
    <property type="term" value="F:DNA-binding transcription activator activity"/>
    <property type="evidence" value="ECO:0000314"/>
    <property type="project" value="CAFA"/>
</dbReference>
<dbReference type="GO" id="GO:0016987">
    <property type="term" value="F:sigma factor activity"/>
    <property type="evidence" value="ECO:0000314"/>
    <property type="project" value="CACAO"/>
</dbReference>
<dbReference type="GO" id="GO:0009009">
    <property type="term" value="F:site-specific recombinase activity"/>
    <property type="evidence" value="ECO:0000314"/>
    <property type="project" value="CAFA"/>
</dbReference>
<dbReference type="GO" id="GO:0006310">
    <property type="term" value="P:DNA recombination"/>
    <property type="evidence" value="ECO:0000314"/>
    <property type="project" value="CAFA"/>
</dbReference>
<dbReference type="GO" id="GO:0006351">
    <property type="term" value="P:DNA-templated transcription"/>
    <property type="evidence" value="ECO:0000314"/>
    <property type="project" value="CACAO"/>
</dbReference>
<dbReference type="GO" id="GO:0006352">
    <property type="term" value="P:DNA-templated transcription initiation"/>
    <property type="evidence" value="ECO:0000250"/>
    <property type="project" value="ComplexPortal"/>
</dbReference>
<dbReference type="GO" id="GO:0006355">
    <property type="term" value="P:regulation of DNA-templated transcription"/>
    <property type="evidence" value="ECO:0000315"/>
    <property type="project" value="EcoliWiki"/>
</dbReference>
<dbReference type="GO" id="GO:2000142">
    <property type="term" value="P:regulation of DNA-templated transcription initiation"/>
    <property type="evidence" value="ECO:0000250"/>
    <property type="project" value="ComplexPortal"/>
</dbReference>
<dbReference type="GO" id="GO:0010468">
    <property type="term" value="P:regulation of gene expression"/>
    <property type="evidence" value="ECO:0000314"/>
    <property type="project" value="EcoCyc"/>
</dbReference>
<dbReference type="GO" id="GO:0009408">
    <property type="term" value="P:response to heat"/>
    <property type="evidence" value="ECO:0000315"/>
    <property type="project" value="EcoCyc"/>
</dbReference>
<dbReference type="CDD" id="cd06171">
    <property type="entry name" value="Sigma70_r4"/>
    <property type="match status" value="1"/>
</dbReference>
<dbReference type="FunFam" id="1.10.10.10:FF:000285">
    <property type="entry name" value="RNA polymerase sigma factor RpoH"/>
    <property type="match status" value="1"/>
</dbReference>
<dbReference type="FunFam" id="1.20.120.1810:FF:000001">
    <property type="entry name" value="RNA polymerase sigma factor RpoH"/>
    <property type="match status" value="1"/>
</dbReference>
<dbReference type="FunFam" id="1.20.140.160:FF:000002">
    <property type="entry name" value="RNA polymerase sigma factor RpoH"/>
    <property type="match status" value="1"/>
</dbReference>
<dbReference type="Gene3D" id="1.20.120.1810">
    <property type="match status" value="1"/>
</dbReference>
<dbReference type="Gene3D" id="1.20.140.160">
    <property type="match status" value="1"/>
</dbReference>
<dbReference type="HAMAP" id="MF_00961">
    <property type="entry name" value="Sigma70_RpoH"/>
    <property type="match status" value="1"/>
</dbReference>
<dbReference type="InterPro" id="IPR014284">
    <property type="entry name" value="RNA_pol_sigma-70_dom"/>
</dbReference>
<dbReference type="InterPro" id="IPR000943">
    <property type="entry name" value="RNA_pol_sigma70"/>
</dbReference>
<dbReference type="InterPro" id="IPR007627">
    <property type="entry name" value="RNA_pol_sigma70_r2"/>
</dbReference>
<dbReference type="InterPro" id="IPR007630">
    <property type="entry name" value="RNA_pol_sigma70_r4"/>
</dbReference>
<dbReference type="InterPro" id="IPR013325">
    <property type="entry name" value="RNA_pol_sigma_r2"/>
</dbReference>
<dbReference type="InterPro" id="IPR013324">
    <property type="entry name" value="RNA_pol_sigma_r3/r4-like"/>
</dbReference>
<dbReference type="InterPro" id="IPR012759">
    <property type="entry name" value="RNA_pol_sigma_RpoH_proteobac"/>
</dbReference>
<dbReference type="InterPro" id="IPR050813">
    <property type="entry name" value="Sigma-70_Factor"/>
</dbReference>
<dbReference type="NCBIfam" id="NF005143">
    <property type="entry name" value="PRK06596.1"/>
    <property type="match status" value="1"/>
</dbReference>
<dbReference type="NCBIfam" id="TIGR02392">
    <property type="entry name" value="rpoH_proteo"/>
    <property type="match status" value="1"/>
</dbReference>
<dbReference type="NCBIfam" id="TIGR02937">
    <property type="entry name" value="sigma70-ECF"/>
    <property type="match status" value="1"/>
</dbReference>
<dbReference type="PANTHER" id="PTHR30376:SF3">
    <property type="entry name" value="RNA POLYMERASE SIGMA FACTOR RPOH"/>
    <property type="match status" value="1"/>
</dbReference>
<dbReference type="PANTHER" id="PTHR30376">
    <property type="entry name" value="SIGMA FACTOR RPOH HEAT SHOCK RELATED"/>
    <property type="match status" value="1"/>
</dbReference>
<dbReference type="Pfam" id="PF04542">
    <property type="entry name" value="Sigma70_r2"/>
    <property type="match status" value="1"/>
</dbReference>
<dbReference type="Pfam" id="PF04545">
    <property type="entry name" value="Sigma70_r4"/>
    <property type="match status" value="1"/>
</dbReference>
<dbReference type="PIRSF" id="PIRSF000770">
    <property type="entry name" value="RNA_pol_sigma-SigE/K"/>
    <property type="match status" value="1"/>
</dbReference>
<dbReference type="PRINTS" id="PR00046">
    <property type="entry name" value="SIGMA70FCT"/>
</dbReference>
<dbReference type="SUPFAM" id="SSF88946">
    <property type="entry name" value="Sigma2 domain of RNA polymerase sigma factors"/>
    <property type="match status" value="1"/>
</dbReference>
<dbReference type="SUPFAM" id="SSF88659">
    <property type="entry name" value="Sigma3 and sigma4 domains of RNA polymerase sigma factors"/>
    <property type="match status" value="1"/>
</dbReference>
<dbReference type="PROSITE" id="PS00715">
    <property type="entry name" value="SIGMA70_1"/>
    <property type="match status" value="1"/>
</dbReference>
<dbReference type="PROSITE" id="PS00716">
    <property type="entry name" value="SIGMA70_2"/>
    <property type="match status" value="1"/>
</dbReference>
<organism>
    <name type="scientific">Escherichia coli (strain K12)</name>
    <dbReference type="NCBI Taxonomy" id="83333"/>
    <lineage>
        <taxon>Bacteria</taxon>
        <taxon>Pseudomonadati</taxon>
        <taxon>Pseudomonadota</taxon>
        <taxon>Gammaproteobacteria</taxon>
        <taxon>Enterobacterales</taxon>
        <taxon>Enterobacteriaceae</taxon>
        <taxon>Escherichia</taxon>
    </lineage>
</organism>
<proteinExistence type="evidence at protein level"/>